<dbReference type="EMBL" id="CP000886">
    <property type="protein sequence ID" value="ABX69944.1"/>
    <property type="molecule type" value="Genomic_DNA"/>
</dbReference>
<dbReference type="RefSeq" id="WP_000818607.1">
    <property type="nucleotide sequence ID" value="NC_010102.1"/>
</dbReference>
<dbReference type="SMR" id="A9MVN6"/>
<dbReference type="KEGG" id="spq:SPAB_04631"/>
<dbReference type="PATRIC" id="fig|1016998.12.peg.4357"/>
<dbReference type="HOGENOM" id="CLU_069356_5_0_6"/>
<dbReference type="BioCyc" id="SENT1016998:SPAB_RS18855-MONOMER"/>
<dbReference type="Proteomes" id="UP000008556">
    <property type="component" value="Chromosome"/>
</dbReference>
<dbReference type="GO" id="GO:0043590">
    <property type="term" value="C:bacterial nucleoid"/>
    <property type="evidence" value="ECO:0007669"/>
    <property type="project" value="UniProtKB-UniRule"/>
</dbReference>
<dbReference type="GO" id="GO:0005737">
    <property type="term" value="C:cytoplasm"/>
    <property type="evidence" value="ECO:0007669"/>
    <property type="project" value="UniProtKB-UniRule"/>
</dbReference>
<dbReference type="GO" id="GO:0003700">
    <property type="term" value="F:DNA-binding transcription factor activity"/>
    <property type="evidence" value="ECO:0007669"/>
    <property type="project" value="TreeGrafter"/>
</dbReference>
<dbReference type="GO" id="GO:0000976">
    <property type="term" value="F:transcription cis-regulatory region binding"/>
    <property type="evidence" value="ECO:0007669"/>
    <property type="project" value="TreeGrafter"/>
</dbReference>
<dbReference type="GO" id="GO:0051301">
    <property type="term" value="P:cell division"/>
    <property type="evidence" value="ECO:0007669"/>
    <property type="project" value="UniProtKB-KW"/>
</dbReference>
<dbReference type="GO" id="GO:0010974">
    <property type="term" value="P:negative regulation of division septum assembly"/>
    <property type="evidence" value="ECO:0007669"/>
    <property type="project" value="InterPro"/>
</dbReference>
<dbReference type="FunFam" id="1.10.357.10:FF:000002">
    <property type="entry name" value="Nucleoid occlusion factor SlmA"/>
    <property type="match status" value="1"/>
</dbReference>
<dbReference type="Gene3D" id="1.10.357.10">
    <property type="entry name" value="Tetracycline Repressor, domain 2"/>
    <property type="match status" value="1"/>
</dbReference>
<dbReference type="HAMAP" id="MF_01839">
    <property type="entry name" value="NO_factor_SlmA"/>
    <property type="match status" value="1"/>
</dbReference>
<dbReference type="InterPro" id="IPR023772">
    <property type="entry name" value="DNA-bd_HTH_TetR-type_CS"/>
</dbReference>
<dbReference type="InterPro" id="IPR009057">
    <property type="entry name" value="Homeodomain-like_sf"/>
</dbReference>
<dbReference type="InterPro" id="IPR050109">
    <property type="entry name" value="HTH-type_TetR-like_transc_reg"/>
</dbReference>
<dbReference type="InterPro" id="IPR001647">
    <property type="entry name" value="HTH_TetR"/>
</dbReference>
<dbReference type="InterPro" id="IPR023769">
    <property type="entry name" value="NO_SlmA"/>
</dbReference>
<dbReference type="InterPro" id="IPR054580">
    <property type="entry name" value="SlmA-like_C"/>
</dbReference>
<dbReference type="InterPro" id="IPR036271">
    <property type="entry name" value="Tet_transcr_reg_TetR-rel_C_sf"/>
</dbReference>
<dbReference type="NCBIfam" id="NF007015">
    <property type="entry name" value="PRK09480.1"/>
    <property type="match status" value="1"/>
</dbReference>
<dbReference type="PANTHER" id="PTHR30055">
    <property type="entry name" value="HTH-TYPE TRANSCRIPTIONAL REGULATOR RUTR"/>
    <property type="match status" value="1"/>
</dbReference>
<dbReference type="PANTHER" id="PTHR30055:SF183">
    <property type="entry name" value="NUCLEOID OCCLUSION FACTOR SLMA"/>
    <property type="match status" value="1"/>
</dbReference>
<dbReference type="Pfam" id="PF22276">
    <property type="entry name" value="SlmA-like_C"/>
    <property type="match status" value="1"/>
</dbReference>
<dbReference type="Pfam" id="PF00440">
    <property type="entry name" value="TetR_N"/>
    <property type="match status" value="1"/>
</dbReference>
<dbReference type="SUPFAM" id="SSF46689">
    <property type="entry name" value="Homeodomain-like"/>
    <property type="match status" value="1"/>
</dbReference>
<dbReference type="SUPFAM" id="SSF48498">
    <property type="entry name" value="Tetracyclin repressor-like, C-terminal domain"/>
    <property type="match status" value="1"/>
</dbReference>
<dbReference type="PROSITE" id="PS01081">
    <property type="entry name" value="HTH_TETR_1"/>
    <property type="match status" value="1"/>
</dbReference>
<dbReference type="PROSITE" id="PS50977">
    <property type="entry name" value="HTH_TETR_2"/>
    <property type="match status" value="1"/>
</dbReference>
<protein>
    <recommendedName>
        <fullName evidence="1">Nucleoid occlusion factor SlmA</fullName>
    </recommendedName>
</protein>
<name>SLMA_SALPB</name>
<comment type="function">
    <text evidence="1">Required for nucleoid occlusion (NO) phenomenon, which prevents Z-ring formation and cell division over the nucleoid. Acts as a DNA-associated cell division inhibitor that binds simultaneously chromosomal DNA and FtsZ, and disrupts the assembly of FtsZ polymers. SlmA-DNA-binding sequences (SBS) are dispersed on non-Ter regions of the chromosome, preventing FtsZ polymerization at these regions.</text>
</comment>
<comment type="subunit">
    <text evidence="1">Homodimer. Interacts with FtsZ.</text>
</comment>
<comment type="subcellular location">
    <subcellularLocation>
        <location evidence="1">Cytoplasm</location>
        <location evidence="1">Nucleoid</location>
    </subcellularLocation>
</comment>
<comment type="similarity">
    <text evidence="1">Belongs to the nucleoid occlusion factor SlmA family.</text>
</comment>
<accession>A9MVN6</accession>
<evidence type="ECO:0000255" key="1">
    <source>
        <dbReference type="HAMAP-Rule" id="MF_01839"/>
    </source>
</evidence>
<organism>
    <name type="scientific">Salmonella paratyphi B (strain ATCC BAA-1250 / SPB7)</name>
    <dbReference type="NCBI Taxonomy" id="1016998"/>
    <lineage>
        <taxon>Bacteria</taxon>
        <taxon>Pseudomonadati</taxon>
        <taxon>Pseudomonadota</taxon>
        <taxon>Gammaproteobacteria</taxon>
        <taxon>Enterobacterales</taxon>
        <taxon>Enterobacteriaceae</taxon>
        <taxon>Salmonella</taxon>
    </lineage>
</organism>
<feature type="chain" id="PRO_1000088460" description="Nucleoid occlusion factor SlmA">
    <location>
        <begin position="1"/>
        <end position="198"/>
    </location>
</feature>
<feature type="domain" description="HTH tetR-type" evidence="1">
    <location>
        <begin position="10"/>
        <end position="70"/>
    </location>
</feature>
<feature type="DNA-binding region" description="H-T-H motif" evidence="1">
    <location>
        <begin position="33"/>
        <end position="52"/>
    </location>
</feature>
<feature type="coiled-coil region" evidence="1">
    <location>
        <begin position="117"/>
        <end position="144"/>
    </location>
</feature>
<proteinExistence type="inferred from homology"/>
<reference key="1">
    <citation type="submission" date="2007-11" db="EMBL/GenBank/DDBJ databases">
        <authorList>
            <consortium name="The Salmonella enterica serovar Paratyphi B Genome Sequencing Project"/>
            <person name="McClelland M."/>
            <person name="Sanderson E.K."/>
            <person name="Porwollik S."/>
            <person name="Spieth J."/>
            <person name="Clifton W.S."/>
            <person name="Fulton R."/>
            <person name="Cordes M."/>
            <person name="Wollam A."/>
            <person name="Shah N."/>
            <person name="Pepin K."/>
            <person name="Bhonagiri V."/>
            <person name="Nash W."/>
            <person name="Johnson M."/>
            <person name="Thiruvilangam P."/>
            <person name="Wilson R."/>
        </authorList>
    </citation>
    <scope>NUCLEOTIDE SEQUENCE [LARGE SCALE GENOMIC DNA]</scope>
    <source>
        <strain>ATCC BAA-1250 / SPB7</strain>
    </source>
</reference>
<gene>
    <name evidence="1" type="primary">slmA</name>
    <name type="ordered locus">SPAB_04631</name>
</gene>
<sequence>MAEKQTAKRNRREEILQSLALMLESSDGSQRITTAKLAASVGVSEAALYRHFPSKTRMFDSLIEFIEDSLITRINLILKDEKNTSTRLRLIVLLILGFGERNPGLTRILTGHALMFEQDRLQGRINQLFERIEAQLRQVLREKRMREGEGYTTDENLLASQLLAFCEGMLSRFVRSEFKYRPTDDFDARWPLIAAQLQ</sequence>
<keyword id="KW-0131">Cell cycle</keyword>
<keyword id="KW-0132">Cell division</keyword>
<keyword id="KW-0175">Coiled coil</keyword>
<keyword id="KW-0963">Cytoplasm</keyword>
<keyword id="KW-0238">DNA-binding</keyword>